<sequence>MSPFSIVLIGFAMSTDAFAAAIGKGAAMRKPQWRDALRAGLIFGCIEAITPVIGWLLGRAASSYVSAYDHWIAFVLLGALGTHMIVAGLRNGPEEAEDAASDTPKRHGVLGLATTGFATSIDAMAVGVSLAFLDVHIGVVAVVVGLCTFSMVTAGVMLGRALGNLIGKRAEMLGGLILVIVGSVILYEHLSGAA</sequence>
<protein>
    <recommendedName>
        <fullName evidence="1">Putative manganese efflux pump MntP</fullName>
    </recommendedName>
</protein>
<proteinExistence type="inferred from homology"/>
<comment type="function">
    <text evidence="1">Probably functions as a manganese efflux pump.</text>
</comment>
<comment type="subcellular location">
    <subcellularLocation>
        <location evidence="1">Cell inner membrane</location>
        <topology evidence="1">Multi-pass membrane protein</topology>
    </subcellularLocation>
</comment>
<comment type="similarity">
    <text evidence="1">Belongs to the MntP (TC 9.B.29) family.</text>
</comment>
<comment type="sequence caution" evidence="2">
    <conflict type="erroneous initiation">
        <sequence resource="EMBL-CDS" id="CAJ26022"/>
    </conflict>
</comment>
<dbReference type="EMBL" id="AM039952">
    <property type="protein sequence ID" value="CAJ26022.1"/>
    <property type="status" value="ALT_INIT"/>
    <property type="molecule type" value="Genomic_DNA"/>
</dbReference>
<dbReference type="RefSeq" id="WP_031424890.1">
    <property type="nucleotide sequence ID" value="NZ_CP017190.1"/>
</dbReference>
<dbReference type="STRING" id="456327.BJD11_23920"/>
<dbReference type="KEGG" id="xcv:XCV4291"/>
<dbReference type="eggNOG" id="COG1971">
    <property type="taxonomic scope" value="Bacteria"/>
</dbReference>
<dbReference type="HOGENOM" id="CLU_096410_0_0_6"/>
<dbReference type="Proteomes" id="UP000007069">
    <property type="component" value="Chromosome"/>
</dbReference>
<dbReference type="GO" id="GO:0005886">
    <property type="term" value="C:plasma membrane"/>
    <property type="evidence" value="ECO:0007669"/>
    <property type="project" value="UniProtKB-SubCell"/>
</dbReference>
<dbReference type="GO" id="GO:0005384">
    <property type="term" value="F:manganese ion transmembrane transporter activity"/>
    <property type="evidence" value="ECO:0007669"/>
    <property type="project" value="UniProtKB-UniRule"/>
</dbReference>
<dbReference type="HAMAP" id="MF_01521">
    <property type="entry name" value="MntP_pump"/>
    <property type="match status" value="1"/>
</dbReference>
<dbReference type="InterPro" id="IPR003810">
    <property type="entry name" value="Mntp/YtaF"/>
</dbReference>
<dbReference type="InterPro" id="IPR022929">
    <property type="entry name" value="Put_MntP"/>
</dbReference>
<dbReference type="PANTHER" id="PTHR35529">
    <property type="entry name" value="MANGANESE EFFLUX PUMP MNTP-RELATED"/>
    <property type="match status" value="1"/>
</dbReference>
<dbReference type="PANTHER" id="PTHR35529:SF1">
    <property type="entry name" value="MANGANESE EFFLUX PUMP MNTP-RELATED"/>
    <property type="match status" value="1"/>
</dbReference>
<dbReference type="Pfam" id="PF02659">
    <property type="entry name" value="Mntp"/>
    <property type="match status" value="1"/>
</dbReference>
<evidence type="ECO:0000255" key="1">
    <source>
        <dbReference type="HAMAP-Rule" id="MF_01521"/>
    </source>
</evidence>
<evidence type="ECO:0000305" key="2"/>
<reference key="1">
    <citation type="journal article" date="2005" name="J. Bacteriol.">
        <title>Insights into genome plasticity and pathogenicity of the plant pathogenic Bacterium Xanthomonas campestris pv. vesicatoria revealed by the complete genome sequence.</title>
        <authorList>
            <person name="Thieme F."/>
            <person name="Koebnik R."/>
            <person name="Bekel T."/>
            <person name="Berger C."/>
            <person name="Boch J."/>
            <person name="Buettner D."/>
            <person name="Caldana C."/>
            <person name="Gaigalat L."/>
            <person name="Goesmann A."/>
            <person name="Kay S."/>
            <person name="Kirchner O."/>
            <person name="Lanz C."/>
            <person name="Linke B."/>
            <person name="McHardy A.C."/>
            <person name="Meyer F."/>
            <person name="Mittenhuber G."/>
            <person name="Nies D.H."/>
            <person name="Niesbach-Kloesgen U."/>
            <person name="Patschkowski T."/>
            <person name="Rueckert C."/>
            <person name="Rupp O."/>
            <person name="Schneiker S."/>
            <person name="Schuster S.C."/>
            <person name="Vorhoelter F.J."/>
            <person name="Weber E."/>
            <person name="Puehler A."/>
            <person name="Bonas U."/>
            <person name="Bartels D."/>
            <person name="Kaiser O."/>
        </authorList>
    </citation>
    <scope>NUCLEOTIDE SEQUENCE [LARGE SCALE GENOMIC DNA]</scope>
    <source>
        <strain>85-10</strain>
    </source>
</reference>
<name>MNTP_XANE5</name>
<organism>
    <name type="scientific">Xanthomonas euvesicatoria pv. vesicatoria (strain 85-10)</name>
    <name type="common">Xanthomonas campestris pv. vesicatoria</name>
    <dbReference type="NCBI Taxonomy" id="316273"/>
    <lineage>
        <taxon>Bacteria</taxon>
        <taxon>Pseudomonadati</taxon>
        <taxon>Pseudomonadota</taxon>
        <taxon>Gammaproteobacteria</taxon>
        <taxon>Lysobacterales</taxon>
        <taxon>Lysobacteraceae</taxon>
        <taxon>Xanthomonas</taxon>
    </lineage>
</organism>
<keyword id="KW-0997">Cell inner membrane</keyword>
<keyword id="KW-1003">Cell membrane</keyword>
<keyword id="KW-0406">Ion transport</keyword>
<keyword id="KW-0464">Manganese</keyword>
<keyword id="KW-0472">Membrane</keyword>
<keyword id="KW-0812">Transmembrane</keyword>
<keyword id="KW-1133">Transmembrane helix</keyword>
<keyword id="KW-0813">Transport</keyword>
<gene>
    <name evidence="1" type="primary">mntP</name>
    <name type="ordered locus">XCV4291</name>
</gene>
<feature type="chain" id="PRO_0000292547" description="Putative manganese efflux pump MntP">
    <location>
        <begin position="1"/>
        <end position="194"/>
    </location>
</feature>
<feature type="transmembrane region" description="Helical" evidence="1">
    <location>
        <begin position="3"/>
        <end position="23"/>
    </location>
</feature>
<feature type="transmembrane region" description="Helical" evidence="1">
    <location>
        <begin position="37"/>
        <end position="57"/>
    </location>
</feature>
<feature type="transmembrane region" description="Helical" evidence="1">
    <location>
        <begin position="69"/>
        <end position="89"/>
    </location>
</feature>
<feature type="transmembrane region" description="Helical" evidence="1">
    <location>
        <begin position="110"/>
        <end position="132"/>
    </location>
</feature>
<feature type="transmembrane region" description="Helical" evidence="1">
    <location>
        <begin position="147"/>
        <end position="167"/>
    </location>
</feature>
<feature type="transmembrane region" description="Helical" evidence="1">
    <location>
        <begin position="172"/>
        <end position="192"/>
    </location>
</feature>
<accession>Q3BMJ1</accession>